<reference key="1">
    <citation type="journal article" date="2000" name="Plant Mol. Biol. Rep.">
        <title>Chinese spring wheat (Triticum aestivum L.) chloroplast genome: complete sequence and contig clones.</title>
        <authorList>
            <person name="Ogihara Y."/>
            <person name="Isono K."/>
            <person name="Kojima T."/>
            <person name="Endo A."/>
            <person name="Hanaoka M."/>
            <person name="Shiina T."/>
            <person name="Terachi T."/>
            <person name="Utsugi S."/>
            <person name="Murata M."/>
            <person name="Mori N."/>
            <person name="Takumi S."/>
            <person name="Ikeo K."/>
            <person name="Gojobori T."/>
            <person name="Murai R."/>
            <person name="Murai K."/>
            <person name="Matsuoka Y."/>
            <person name="Ohnishi Y."/>
            <person name="Tajiri H."/>
            <person name="Tsunewaki K."/>
        </authorList>
    </citation>
    <scope>NUCLEOTIDE SEQUENCE [LARGE SCALE GENOMIC DNA]</scope>
    <source>
        <strain>cv. Chinese Spring</strain>
    </source>
</reference>
<name>RR11_WHEAT</name>
<geneLocation type="chloroplast"/>
<comment type="subunit">
    <text evidence="1">Part of the 30S ribosomal subunit.</text>
</comment>
<comment type="subcellular location">
    <subcellularLocation>
        <location>Plastid</location>
        <location>Chloroplast</location>
    </subcellularLocation>
</comment>
<comment type="similarity">
    <text evidence="1">Belongs to the universal ribosomal protein uS11 family.</text>
</comment>
<keyword id="KW-0150">Chloroplast</keyword>
<keyword id="KW-0934">Plastid</keyword>
<keyword id="KW-1185">Reference proteome</keyword>
<keyword id="KW-0687">Ribonucleoprotein</keyword>
<keyword id="KW-0689">Ribosomal protein</keyword>
<keyword id="KW-0694">RNA-binding</keyword>
<keyword id="KW-0699">rRNA-binding</keyword>
<protein>
    <recommendedName>
        <fullName evidence="1">Small ribosomal subunit protein uS11c</fullName>
    </recommendedName>
    <alternativeName>
        <fullName evidence="2">30S ribosomal protein S11, chloroplastic</fullName>
    </alternativeName>
</protein>
<dbReference type="EMBL" id="AB042240">
    <property type="protein sequence ID" value="BAB47066.1"/>
    <property type="molecule type" value="Genomic_DNA"/>
</dbReference>
<dbReference type="RefSeq" id="NP_114290.1">
    <property type="nucleotide sequence ID" value="NC_002762.1"/>
</dbReference>
<dbReference type="SMR" id="Q95H53"/>
<dbReference type="STRING" id="4565.Q95H53"/>
<dbReference type="PaxDb" id="4565-EPlTAEP00000010070"/>
<dbReference type="EnsemblPlants" id="TraesCS7D03G1308500.1">
    <property type="protein sequence ID" value="TraesCS7D03G1308500.1.CDS1"/>
    <property type="gene ID" value="TraesCS7D03G1308500"/>
</dbReference>
<dbReference type="EnsemblPlants" id="TraesCSU02G259800.1">
    <property type="protein sequence ID" value="TraesCSU02G259800.1.cds1"/>
    <property type="gene ID" value="TraesCSU02G259800"/>
</dbReference>
<dbReference type="EnsemblPlants" id="TraesJAG5B03G02848530.1">
    <property type="protein sequence ID" value="TraesJAG5B03G02848530.1.CDS1"/>
    <property type="gene ID" value="TraesJAG5B03G02848530"/>
</dbReference>
<dbReference type="EnsemblPlants" id="TraesJUL2D03G01304700.1">
    <property type="protein sequence ID" value="TraesJUL2D03G01304700.1.CDS1"/>
    <property type="gene ID" value="TraesJUL2D03G01304700"/>
</dbReference>
<dbReference type="EnsemblPlants" id="TraesKAR1D01G0107080.1">
    <property type="protein sequence ID" value="cds.TraesKAR1D01G0107080.1"/>
    <property type="gene ID" value="TraesKAR1D01G0107080"/>
</dbReference>
<dbReference type="EnsemblPlants" id="TraesKAR2D01G0458720.1">
    <property type="protein sequence ID" value="cds.TraesKAR2D01G0458720.1"/>
    <property type="gene ID" value="TraesKAR2D01G0458720"/>
</dbReference>
<dbReference type="EnsemblPlants" id="TraesKAR4D01G0083890.1">
    <property type="protein sequence ID" value="cds.TraesKAR4D01G0083890.1"/>
    <property type="gene ID" value="TraesKAR4D01G0083890"/>
</dbReference>
<dbReference type="EnsemblPlants" id="TraesKAR6B01G0219350.1">
    <property type="protein sequence ID" value="cds.TraesKAR6B01G0219350.1"/>
    <property type="gene ID" value="TraesKAR6B01G0219350"/>
</dbReference>
<dbReference type="EnsemblPlants" id="TraesKAR7B01G0332500.1">
    <property type="protein sequence ID" value="cds.TraesKAR7B01G0332500.1"/>
    <property type="gene ID" value="TraesKAR7B01G0332500"/>
</dbReference>
<dbReference type="EnsemblPlants" id="TraesKAR7D01G0464660.1">
    <property type="protein sequence ID" value="cds.TraesKAR7D01G0464660.1"/>
    <property type="gene ID" value="TraesKAR7D01G0464660"/>
</dbReference>
<dbReference type="EnsemblPlants" id="TraesKARUn01G0031970.1">
    <property type="protein sequence ID" value="cds.TraesKARUn01G0031970.1"/>
    <property type="gene ID" value="TraesKARUn01G0031970"/>
</dbReference>
<dbReference type="EnsemblPlants" id="TraesKARUn01G0067450.1">
    <property type="protein sequence ID" value="cds.TraesKARUn01G0067450.1"/>
    <property type="gene ID" value="TraesKARUn01G0067450"/>
</dbReference>
<dbReference type="EnsemblPlants" id="TraesKARUn01G0067550.1">
    <property type="protein sequence ID" value="cds.TraesKARUn01G0067550.1"/>
    <property type="gene ID" value="TraesKARUn01G0067550"/>
</dbReference>
<dbReference type="EnsemblPlants" id="TraesKARUn01G0067930.1">
    <property type="protein sequence ID" value="cds.TraesKARUn01G0067930.1"/>
    <property type="gene ID" value="TraesKARUn01G0067930"/>
</dbReference>
<dbReference type="EnsemblPlants" id="TraesKARUn01G0068140.1">
    <property type="protein sequence ID" value="cds.TraesKARUn01G0068140.1"/>
    <property type="gene ID" value="TraesKARUn01G0068140"/>
</dbReference>
<dbReference type="EnsemblPlants" id="TraesKARUn01G0068350.1">
    <property type="protein sequence ID" value="cds.TraesKARUn01G0068350.1"/>
    <property type="gene ID" value="TraesKARUn01G0068350"/>
</dbReference>
<dbReference type="EnsemblPlants" id="TraesKARUn01G0068840.1">
    <property type="protein sequence ID" value="cds.TraesKARUn01G0068840.1"/>
    <property type="gene ID" value="TraesKARUn01G0068840"/>
</dbReference>
<dbReference type="EnsemblPlants" id="TraesKARUn01G0072720.1">
    <property type="protein sequence ID" value="cds.TraesKARUn01G0072720.1"/>
    <property type="gene ID" value="TraesKARUn01G0072720"/>
</dbReference>
<dbReference type="EnsemblPlants" id="TraesKARUn01G0077490.1">
    <property type="protein sequence ID" value="cds.TraesKARUn01G0077490.1"/>
    <property type="gene ID" value="TraesKARUn01G0077490"/>
</dbReference>
<dbReference type="EnsemblPlants" id="TraesKARUn01G0077590.1">
    <property type="protein sequence ID" value="cds.TraesKARUn01G0077590.1"/>
    <property type="gene ID" value="TraesKARUn01G0077590"/>
</dbReference>
<dbReference type="EnsemblPlants" id="TraesKARUn01G0078090.1">
    <property type="protein sequence ID" value="cds.TraesKARUn01G0078090.1"/>
    <property type="gene ID" value="TraesKARUn01G0078090"/>
</dbReference>
<dbReference type="EnsemblPlants" id="TraesKARUn01G0079200.1">
    <property type="protein sequence ID" value="cds.TraesKARUn01G0079200.1"/>
    <property type="gene ID" value="TraesKARUn01G0079200"/>
</dbReference>
<dbReference type="EnsemblPlants" id="TraesKARUn01G0117820.1">
    <property type="protein sequence ID" value="cds.TraesKARUn01G0117820.1"/>
    <property type="gene ID" value="TraesKARUn01G0117820"/>
</dbReference>
<dbReference type="EnsemblPlants" id="TraesKARUn01G0118340.1">
    <property type="protein sequence ID" value="cds.TraesKARUn01G0118340.1"/>
    <property type="gene ID" value="TraesKARUn01G0118340"/>
</dbReference>
<dbReference type="EnsemblPlants" id="TraesKARUn01G0176250.1">
    <property type="protein sequence ID" value="cds.TraesKARUn01G0176250.1"/>
    <property type="gene ID" value="TraesKARUn01G0176250"/>
</dbReference>
<dbReference type="EnsemblPlants" id="TraesKARUn01G0176490.1">
    <property type="protein sequence ID" value="cds.TraesKARUn01G0176490.1"/>
    <property type="gene ID" value="TraesKARUn01G0176490"/>
</dbReference>
<dbReference type="EnsemblPlants" id="TraesKARUn01G0184170.1">
    <property type="protein sequence ID" value="cds.TraesKARUn01G0184170.1"/>
    <property type="gene ID" value="TraesKARUn01G0184170"/>
</dbReference>
<dbReference type="EnsemblPlants" id="TraesKARUn01G0184620.1">
    <property type="protein sequence ID" value="cds.TraesKARUn01G0184620.1"/>
    <property type="gene ID" value="TraesKARUn01G0184620"/>
</dbReference>
<dbReference type="EnsemblPlants" id="TraesKARUn01G0184930.1">
    <property type="protein sequence ID" value="cds.TraesKARUn01G0184930.1"/>
    <property type="gene ID" value="TraesKARUn01G0184930"/>
</dbReference>
<dbReference type="EnsemblPlants" id="TraesKARUn01G0185290.1">
    <property type="protein sequence ID" value="cds.TraesKARUn01G0185290.1"/>
    <property type="gene ID" value="TraesKARUn01G0185290"/>
</dbReference>
<dbReference type="EnsemblPlants" id="TraesKARUn01G0185380.1">
    <property type="protein sequence ID" value="cds.TraesKARUn01G0185380.1"/>
    <property type="gene ID" value="TraesKARUn01G0185380"/>
</dbReference>
<dbReference type="EnsemblPlants" id="TraesKARUn01G0185500.1">
    <property type="protein sequence ID" value="cds.TraesKARUn01G0185500.1"/>
    <property type="gene ID" value="TraesKARUn01G0185500"/>
</dbReference>
<dbReference type="EnsemblPlants" id="TraesKARUn01G0185710.1">
    <property type="protein sequence ID" value="cds.TraesKARUn01G0185710.1"/>
    <property type="gene ID" value="TraesKARUn01G0185710"/>
</dbReference>
<dbReference type="EnsemblPlants" id="TraesKARUn01G0186000.1">
    <property type="protein sequence ID" value="cds.TraesKARUn01G0186000.1"/>
    <property type="gene ID" value="TraesKARUn01G0186000"/>
</dbReference>
<dbReference type="EnsemblPlants" id="TraesKARUn01G0186460.1">
    <property type="protein sequence ID" value="cds.TraesKARUn01G0186460.1"/>
    <property type="gene ID" value="TraesKARUn01G0186460"/>
</dbReference>
<dbReference type="EnsemblPlants" id="TraesKARUn01G0191790.1">
    <property type="protein sequence ID" value="cds.TraesKARUn01G0191790.1"/>
    <property type="gene ID" value="TraesKARUn01G0191790"/>
</dbReference>
<dbReference type="EnsemblPlants" id="TraesLAC1D03G00458740.1">
    <property type="protein sequence ID" value="TraesLAC1D03G00458740.1.CDS1"/>
    <property type="gene ID" value="TraesLAC1D03G00458740"/>
</dbReference>
<dbReference type="EnsemblPlants" id="TraesLAC7D03G04438950.1">
    <property type="protein sequence ID" value="TraesLAC7D03G04438950.1.CDS1"/>
    <property type="gene ID" value="TraesLAC7D03G04438950"/>
</dbReference>
<dbReference type="EnsemblPlants" id="TraesLDM3B03G01608390.1">
    <property type="protein sequence ID" value="TraesLDM3B03G01608390.1.CDS1"/>
    <property type="gene ID" value="TraesLDM3B03G01608390"/>
</dbReference>
<dbReference type="EnsemblPlants" id="TraesLDM7D03G04499840.1">
    <property type="protein sequence ID" value="TraesLDM7D03G04499840.1.CDS1"/>
    <property type="gene ID" value="TraesLDM7D03G04499840"/>
</dbReference>
<dbReference type="EnsemblPlants" id="TraesMAC1D03G00454780.1">
    <property type="protein sequence ID" value="TraesMAC1D03G00454780.1.CDS1"/>
    <property type="gene ID" value="TraesMAC1D03G00454780"/>
</dbReference>
<dbReference type="EnsemblPlants" id="TraesMAC7D03G04485790.1">
    <property type="protein sequence ID" value="TraesMAC7D03G04485790.1.CDS1"/>
    <property type="gene ID" value="TraesMAC7D03G04485790"/>
</dbReference>
<dbReference type="EnsemblPlants" id="TraesNOR1D03G00462470.1">
    <property type="protein sequence ID" value="TraesNOR1D03G00462470.1.CDS1"/>
    <property type="gene ID" value="TraesNOR1D03G00462470"/>
</dbReference>
<dbReference type="EnsemblPlants" id="TraesPARA_EIv1.0_0257490.1">
    <property type="protein sequence ID" value="TraesPARA_EIv1.0_0257490.1.CDS1"/>
    <property type="gene ID" value="TraesPARA_EIv1.0_0257490"/>
</dbReference>
<dbReference type="EnsemblPlants" id="TraesPARA_EIv1.0_0758400.1">
    <property type="protein sequence ID" value="TraesPARA_EIv1.0_0758400.1.CDS1"/>
    <property type="gene ID" value="TraesPARA_EIv1.0_0758400"/>
</dbReference>
<dbReference type="EnsemblPlants" id="TraesPARA_EIv1.0_1434310.1">
    <property type="protein sequence ID" value="TraesPARA_EIv1.0_1434310.1.CDS1"/>
    <property type="gene ID" value="TraesPARA_EIv1.0_1434310"/>
</dbReference>
<dbReference type="EnsemblPlants" id="TraesPARA_EIv1.0_2643240.1">
    <property type="protein sequence ID" value="TraesPARA_EIv1.0_2643240.1.CDS1"/>
    <property type="gene ID" value="TraesPARA_EIv1.0_2643240"/>
</dbReference>
<dbReference type="EnsemblPlants" id="TraesPARA_EIv1.0_2643770.1">
    <property type="protein sequence ID" value="TraesPARA_EIv1.0_2643770.1.CDS1"/>
    <property type="gene ID" value="TraesPARA_EIv1.0_2643770"/>
</dbReference>
<dbReference type="EnsemblPlants" id="TraesPARA_EIv1.0_2655870.1">
    <property type="protein sequence ID" value="TraesPARA_EIv1.0_2655870.1.CDS1"/>
    <property type="gene ID" value="TraesPARA_EIv1.0_2655870"/>
</dbReference>
<dbReference type="EnsemblPlants" id="TraesPARA_EIv1.0_2656020.1">
    <property type="protein sequence ID" value="TraesPARA_EIv1.0_2656020.1.CDS1"/>
    <property type="gene ID" value="TraesPARA_EIv1.0_2656020"/>
</dbReference>
<dbReference type="EnsemblPlants" id="TraesPARA_EIv1.0_2657080.1">
    <property type="protein sequence ID" value="TraesPARA_EIv1.0_2657080.1.CDS1"/>
    <property type="gene ID" value="TraesPARA_EIv1.0_2657080"/>
</dbReference>
<dbReference type="EnsemblPlants" id="TraesPARA_EIv1.0_2678970.1">
    <property type="protein sequence ID" value="TraesPARA_EIv1.0_2678970.1.CDS1"/>
    <property type="gene ID" value="TraesPARA_EIv1.0_2678970"/>
</dbReference>
<dbReference type="EnsemblPlants" id="TraesPARA_EIv1.0_2679880.1">
    <property type="protein sequence ID" value="TraesPARA_EIv1.0_2679880.1.CDS1"/>
    <property type="gene ID" value="TraesPARA_EIv1.0_2679880"/>
</dbReference>
<dbReference type="EnsemblPlants" id="TraesPARA_EIv1.0_2680250.1">
    <property type="protein sequence ID" value="TraesPARA_EIv1.0_2680250.1.CDS1"/>
    <property type="gene ID" value="TraesPARA_EIv1.0_2680250"/>
</dbReference>
<dbReference type="EnsemblPlants" id="TraesPARA_EIv1.0_2681970.1">
    <property type="protein sequence ID" value="TraesPARA_EIv1.0_2681970.1.CDS1"/>
    <property type="gene ID" value="TraesPARA_EIv1.0_2681970"/>
</dbReference>
<dbReference type="EnsemblPlants" id="TraesRN1D0100323600.1">
    <property type="protein sequence ID" value="TraesRN1D0100323600.1"/>
    <property type="gene ID" value="TraesRN1D0100323600"/>
</dbReference>
<dbReference type="EnsemblPlants" id="TraesRN2D0100580800.1">
    <property type="protein sequence ID" value="TraesRN2D0100580800.1"/>
    <property type="gene ID" value="TraesRN2D0100580800"/>
</dbReference>
<dbReference type="EnsemblPlants" id="TraesRN3A0101023100.1">
    <property type="protein sequence ID" value="TraesRN3A0101023100.1"/>
    <property type="gene ID" value="TraesRN3A0101023100"/>
</dbReference>
<dbReference type="EnsemblPlants" id="TraesRN3B0100439700.1">
    <property type="protein sequence ID" value="TraesRN3B0100439700.1"/>
    <property type="gene ID" value="TraesRN3B0100439700"/>
</dbReference>
<dbReference type="EnsemblPlants" id="TraesRN7A0100507800.1">
    <property type="protein sequence ID" value="TraesRN7A0100507800.1"/>
    <property type="gene ID" value="TraesRN7A0100507800"/>
</dbReference>
<dbReference type="EnsemblPlants" id="TraesSTA7D03G04491000.1">
    <property type="protein sequence ID" value="TraesSTA7D03G04491000.1.CDS1"/>
    <property type="gene ID" value="TraesSTA7D03G04491000"/>
</dbReference>
<dbReference type="EnsemblPlants" id="TraesSYM1D03G00461900.1">
    <property type="protein sequence ID" value="TraesSYM1D03G00461900.1.CDS1"/>
    <property type="gene ID" value="TraesSYM1D03G00461900"/>
</dbReference>
<dbReference type="GeneID" id="803194"/>
<dbReference type="Gramene" id="TraesCS7D03G1308500.1">
    <property type="protein sequence ID" value="TraesCS7D03G1308500.1.CDS1"/>
    <property type="gene ID" value="TraesCS7D03G1308500"/>
</dbReference>
<dbReference type="Gramene" id="TraesCSU02G259800.1">
    <property type="protein sequence ID" value="TraesCSU02G259800.1.cds1"/>
    <property type="gene ID" value="TraesCSU02G259800"/>
</dbReference>
<dbReference type="Gramene" id="TraesJAG5B03G02848530.1">
    <property type="protein sequence ID" value="TraesJAG5B03G02848530.1.CDS1"/>
    <property type="gene ID" value="TraesJAG5B03G02848530"/>
</dbReference>
<dbReference type="Gramene" id="TraesJUL2D03G01304700.1">
    <property type="protein sequence ID" value="TraesJUL2D03G01304700.1.CDS1"/>
    <property type="gene ID" value="TraesJUL2D03G01304700"/>
</dbReference>
<dbReference type="Gramene" id="TraesKAR1D01G0107080.1">
    <property type="protein sequence ID" value="cds.TraesKAR1D01G0107080.1"/>
    <property type="gene ID" value="TraesKAR1D01G0107080"/>
</dbReference>
<dbReference type="Gramene" id="TraesKAR2D01G0458720.1">
    <property type="protein sequence ID" value="cds.TraesKAR2D01G0458720.1"/>
    <property type="gene ID" value="TraesKAR2D01G0458720"/>
</dbReference>
<dbReference type="Gramene" id="TraesKAR4D01G0083890.1">
    <property type="protein sequence ID" value="cds.TraesKAR4D01G0083890.1"/>
    <property type="gene ID" value="TraesKAR4D01G0083890"/>
</dbReference>
<dbReference type="Gramene" id="TraesKAR6B01G0219350.1">
    <property type="protein sequence ID" value="cds.TraesKAR6B01G0219350.1"/>
    <property type="gene ID" value="TraesKAR6B01G0219350"/>
</dbReference>
<dbReference type="Gramene" id="TraesKAR7B01G0332500.1">
    <property type="protein sequence ID" value="cds.TraesKAR7B01G0332500.1"/>
    <property type="gene ID" value="TraesKAR7B01G0332500"/>
</dbReference>
<dbReference type="Gramene" id="TraesKAR7D01G0464660.1">
    <property type="protein sequence ID" value="cds.TraesKAR7D01G0464660.1"/>
    <property type="gene ID" value="TraesKAR7D01G0464660"/>
</dbReference>
<dbReference type="Gramene" id="TraesKARUn01G0031970.1">
    <property type="protein sequence ID" value="cds.TraesKARUn01G0031970.1"/>
    <property type="gene ID" value="TraesKARUn01G0031970"/>
</dbReference>
<dbReference type="Gramene" id="TraesKARUn01G0067450.1">
    <property type="protein sequence ID" value="cds.TraesKARUn01G0067450.1"/>
    <property type="gene ID" value="TraesKARUn01G0067450"/>
</dbReference>
<dbReference type="Gramene" id="TraesKARUn01G0067550.1">
    <property type="protein sequence ID" value="cds.TraesKARUn01G0067550.1"/>
    <property type="gene ID" value="TraesKARUn01G0067550"/>
</dbReference>
<dbReference type="Gramene" id="TraesKARUn01G0067930.1">
    <property type="protein sequence ID" value="cds.TraesKARUn01G0067930.1"/>
    <property type="gene ID" value="TraesKARUn01G0067930"/>
</dbReference>
<dbReference type="Gramene" id="TraesKARUn01G0068140.1">
    <property type="protein sequence ID" value="cds.TraesKARUn01G0068140.1"/>
    <property type="gene ID" value="TraesKARUn01G0068140"/>
</dbReference>
<dbReference type="Gramene" id="TraesKARUn01G0068350.1">
    <property type="protein sequence ID" value="cds.TraesKARUn01G0068350.1"/>
    <property type="gene ID" value="TraesKARUn01G0068350"/>
</dbReference>
<dbReference type="Gramene" id="TraesKARUn01G0068840.1">
    <property type="protein sequence ID" value="cds.TraesKARUn01G0068840.1"/>
    <property type="gene ID" value="TraesKARUn01G0068840"/>
</dbReference>
<dbReference type="Gramene" id="TraesKARUn01G0072720.1">
    <property type="protein sequence ID" value="cds.TraesKARUn01G0072720.1"/>
    <property type="gene ID" value="TraesKARUn01G0072720"/>
</dbReference>
<dbReference type="Gramene" id="TraesKARUn01G0077490.1">
    <property type="protein sequence ID" value="cds.TraesKARUn01G0077490.1"/>
    <property type="gene ID" value="TraesKARUn01G0077490"/>
</dbReference>
<dbReference type="Gramene" id="TraesKARUn01G0077590.1">
    <property type="protein sequence ID" value="cds.TraesKARUn01G0077590.1"/>
    <property type="gene ID" value="TraesKARUn01G0077590"/>
</dbReference>
<dbReference type="Gramene" id="TraesKARUn01G0078090.1">
    <property type="protein sequence ID" value="cds.TraesKARUn01G0078090.1"/>
    <property type="gene ID" value="TraesKARUn01G0078090"/>
</dbReference>
<dbReference type="Gramene" id="TraesKARUn01G0079200.1">
    <property type="protein sequence ID" value="cds.TraesKARUn01G0079200.1"/>
    <property type="gene ID" value="TraesKARUn01G0079200"/>
</dbReference>
<dbReference type="Gramene" id="TraesKARUn01G0117820.1">
    <property type="protein sequence ID" value="cds.TraesKARUn01G0117820.1"/>
    <property type="gene ID" value="TraesKARUn01G0117820"/>
</dbReference>
<dbReference type="Gramene" id="TraesKARUn01G0118340.1">
    <property type="protein sequence ID" value="cds.TraesKARUn01G0118340.1"/>
    <property type="gene ID" value="TraesKARUn01G0118340"/>
</dbReference>
<dbReference type="Gramene" id="TraesKARUn01G0176250.1">
    <property type="protein sequence ID" value="cds.TraesKARUn01G0176250.1"/>
    <property type="gene ID" value="TraesKARUn01G0176250"/>
</dbReference>
<dbReference type="Gramene" id="TraesKARUn01G0176490.1">
    <property type="protein sequence ID" value="cds.TraesKARUn01G0176490.1"/>
    <property type="gene ID" value="TraesKARUn01G0176490"/>
</dbReference>
<dbReference type="Gramene" id="TraesKARUn01G0184170.1">
    <property type="protein sequence ID" value="cds.TraesKARUn01G0184170.1"/>
    <property type="gene ID" value="TraesKARUn01G0184170"/>
</dbReference>
<dbReference type="Gramene" id="TraesKARUn01G0184620.1">
    <property type="protein sequence ID" value="cds.TraesKARUn01G0184620.1"/>
    <property type="gene ID" value="TraesKARUn01G0184620"/>
</dbReference>
<dbReference type="Gramene" id="TraesKARUn01G0184930.1">
    <property type="protein sequence ID" value="cds.TraesKARUn01G0184930.1"/>
    <property type="gene ID" value="TraesKARUn01G0184930"/>
</dbReference>
<dbReference type="Gramene" id="TraesKARUn01G0185290.1">
    <property type="protein sequence ID" value="cds.TraesKARUn01G0185290.1"/>
    <property type="gene ID" value="TraesKARUn01G0185290"/>
</dbReference>
<dbReference type="Gramene" id="TraesKARUn01G0185380.1">
    <property type="protein sequence ID" value="cds.TraesKARUn01G0185380.1"/>
    <property type="gene ID" value="TraesKARUn01G0185380"/>
</dbReference>
<dbReference type="Gramene" id="TraesKARUn01G0185500.1">
    <property type="protein sequence ID" value="cds.TraesKARUn01G0185500.1"/>
    <property type="gene ID" value="TraesKARUn01G0185500"/>
</dbReference>
<dbReference type="Gramene" id="TraesKARUn01G0185710.1">
    <property type="protein sequence ID" value="cds.TraesKARUn01G0185710.1"/>
    <property type="gene ID" value="TraesKARUn01G0185710"/>
</dbReference>
<dbReference type="Gramene" id="TraesKARUn01G0186000.1">
    <property type="protein sequence ID" value="cds.TraesKARUn01G0186000.1"/>
    <property type="gene ID" value="TraesKARUn01G0186000"/>
</dbReference>
<dbReference type="Gramene" id="TraesKARUn01G0186460.1">
    <property type="protein sequence ID" value="cds.TraesKARUn01G0186460.1"/>
    <property type="gene ID" value="TraesKARUn01G0186460"/>
</dbReference>
<dbReference type="Gramene" id="TraesKARUn01G0191790.1">
    <property type="protein sequence ID" value="cds.TraesKARUn01G0191790.1"/>
    <property type="gene ID" value="TraesKARUn01G0191790"/>
</dbReference>
<dbReference type="Gramene" id="TraesLAC1D03G00458740.1">
    <property type="protein sequence ID" value="TraesLAC1D03G00458740.1.CDS1"/>
    <property type="gene ID" value="TraesLAC1D03G00458740"/>
</dbReference>
<dbReference type="Gramene" id="TraesLAC7D03G04438950.1">
    <property type="protein sequence ID" value="TraesLAC7D03G04438950.1.CDS1"/>
    <property type="gene ID" value="TraesLAC7D03G04438950"/>
</dbReference>
<dbReference type="Gramene" id="TraesLDM3B03G01608390.1">
    <property type="protein sequence ID" value="TraesLDM3B03G01608390.1.CDS1"/>
    <property type="gene ID" value="TraesLDM3B03G01608390"/>
</dbReference>
<dbReference type="Gramene" id="TraesLDM7D03G04499840.1">
    <property type="protein sequence ID" value="TraesLDM7D03G04499840.1.CDS1"/>
    <property type="gene ID" value="TraesLDM7D03G04499840"/>
</dbReference>
<dbReference type="Gramene" id="TraesMAC1D03G00454780.1">
    <property type="protein sequence ID" value="TraesMAC1D03G00454780.1.CDS1"/>
    <property type="gene ID" value="TraesMAC1D03G00454780"/>
</dbReference>
<dbReference type="Gramene" id="TraesMAC7D03G04485790.1">
    <property type="protein sequence ID" value="TraesMAC7D03G04485790.1.CDS1"/>
    <property type="gene ID" value="TraesMAC7D03G04485790"/>
</dbReference>
<dbReference type="Gramene" id="TraesNOR1D03G00462470.1">
    <property type="protein sequence ID" value="TraesNOR1D03G00462470.1.CDS1"/>
    <property type="gene ID" value="TraesNOR1D03G00462470"/>
</dbReference>
<dbReference type="Gramene" id="TraesPARA_EIv1.0_0257490.1">
    <property type="protein sequence ID" value="TraesPARA_EIv1.0_0257490.1.CDS1"/>
    <property type="gene ID" value="TraesPARA_EIv1.0_0257490"/>
</dbReference>
<dbReference type="Gramene" id="TraesPARA_EIv1.0_0758400.1">
    <property type="protein sequence ID" value="TraesPARA_EIv1.0_0758400.1.CDS1"/>
    <property type="gene ID" value="TraesPARA_EIv1.0_0758400"/>
</dbReference>
<dbReference type="Gramene" id="TraesPARA_EIv1.0_1434310.1">
    <property type="protein sequence ID" value="TraesPARA_EIv1.0_1434310.1.CDS1"/>
    <property type="gene ID" value="TraesPARA_EIv1.0_1434310"/>
</dbReference>
<dbReference type="Gramene" id="TraesPARA_EIv1.0_2643240.1">
    <property type="protein sequence ID" value="TraesPARA_EIv1.0_2643240.1.CDS1"/>
    <property type="gene ID" value="TraesPARA_EIv1.0_2643240"/>
</dbReference>
<dbReference type="Gramene" id="TraesPARA_EIv1.0_2643770.1">
    <property type="protein sequence ID" value="TraesPARA_EIv1.0_2643770.1.CDS1"/>
    <property type="gene ID" value="TraesPARA_EIv1.0_2643770"/>
</dbReference>
<dbReference type="Gramene" id="TraesPARA_EIv1.0_2655870.1">
    <property type="protein sequence ID" value="TraesPARA_EIv1.0_2655870.1.CDS1"/>
    <property type="gene ID" value="TraesPARA_EIv1.0_2655870"/>
</dbReference>
<dbReference type="Gramene" id="TraesPARA_EIv1.0_2656020.1">
    <property type="protein sequence ID" value="TraesPARA_EIv1.0_2656020.1.CDS1"/>
    <property type="gene ID" value="TraesPARA_EIv1.0_2656020"/>
</dbReference>
<dbReference type="Gramene" id="TraesPARA_EIv1.0_2657080.1">
    <property type="protein sequence ID" value="TraesPARA_EIv1.0_2657080.1.CDS1"/>
    <property type="gene ID" value="TraesPARA_EIv1.0_2657080"/>
</dbReference>
<dbReference type="Gramene" id="TraesPARA_EIv1.0_2678970.1">
    <property type="protein sequence ID" value="TraesPARA_EIv1.0_2678970.1.CDS1"/>
    <property type="gene ID" value="TraesPARA_EIv1.0_2678970"/>
</dbReference>
<dbReference type="Gramene" id="TraesPARA_EIv1.0_2679880.1">
    <property type="protein sequence ID" value="TraesPARA_EIv1.0_2679880.1.CDS1"/>
    <property type="gene ID" value="TraesPARA_EIv1.0_2679880"/>
</dbReference>
<dbReference type="Gramene" id="TraesPARA_EIv1.0_2680250.1">
    <property type="protein sequence ID" value="TraesPARA_EIv1.0_2680250.1.CDS1"/>
    <property type="gene ID" value="TraesPARA_EIv1.0_2680250"/>
</dbReference>
<dbReference type="Gramene" id="TraesPARA_EIv1.0_2681970.1">
    <property type="protein sequence ID" value="TraesPARA_EIv1.0_2681970.1.CDS1"/>
    <property type="gene ID" value="TraesPARA_EIv1.0_2681970"/>
</dbReference>
<dbReference type="Gramene" id="TraesRN1D0100323600.1">
    <property type="protein sequence ID" value="TraesRN1D0100323600.1"/>
    <property type="gene ID" value="TraesRN1D0100323600"/>
</dbReference>
<dbReference type="Gramene" id="TraesRN2D0100580800.1">
    <property type="protein sequence ID" value="TraesRN2D0100580800.1"/>
    <property type="gene ID" value="TraesRN2D0100580800"/>
</dbReference>
<dbReference type="Gramene" id="TraesRN3A0101023100.1">
    <property type="protein sequence ID" value="TraesRN3A0101023100.1"/>
    <property type="gene ID" value="TraesRN3A0101023100"/>
</dbReference>
<dbReference type="Gramene" id="TraesRN3B0100439700.1">
    <property type="protein sequence ID" value="TraesRN3B0100439700.1"/>
    <property type="gene ID" value="TraesRN3B0100439700"/>
</dbReference>
<dbReference type="Gramene" id="TraesRN7A0100507800.1">
    <property type="protein sequence ID" value="TraesRN7A0100507800.1"/>
    <property type="gene ID" value="TraesRN7A0100507800"/>
</dbReference>
<dbReference type="Gramene" id="TraesSTA7D03G04491000.1">
    <property type="protein sequence ID" value="TraesSTA7D03G04491000.1.CDS1"/>
    <property type="gene ID" value="TraesSTA7D03G04491000"/>
</dbReference>
<dbReference type="Gramene" id="TraesSYM1D03G00461900.1">
    <property type="protein sequence ID" value="TraesSYM1D03G00461900.1.CDS1"/>
    <property type="gene ID" value="TraesSYM1D03G00461900"/>
</dbReference>
<dbReference type="KEGG" id="taes:803194"/>
<dbReference type="eggNOG" id="KOG0408">
    <property type="taxonomic scope" value="Eukaryota"/>
</dbReference>
<dbReference type="HOGENOM" id="CLU_072439_5_1_1"/>
<dbReference type="OMA" id="GVAHINV"/>
<dbReference type="OrthoDB" id="535480at2759"/>
<dbReference type="Proteomes" id="UP000019116">
    <property type="component" value="Chloroplast"/>
</dbReference>
<dbReference type="GO" id="GO:0009507">
    <property type="term" value="C:chloroplast"/>
    <property type="evidence" value="ECO:0007669"/>
    <property type="project" value="UniProtKB-SubCell"/>
</dbReference>
<dbReference type="GO" id="GO:1990904">
    <property type="term" value="C:ribonucleoprotein complex"/>
    <property type="evidence" value="ECO:0007669"/>
    <property type="project" value="UniProtKB-KW"/>
</dbReference>
<dbReference type="GO" id="GO:0005840">
    <property type="term" value="C:ribosome"/>
    <property type="evidence" value="ECO:0007669"/>
    <property type="project" value="UniProtKB-KW"/>
</dbReference>
<dbReference type="GO" id="GO:0019843">
    <property type="term" value="F:rRNA binding"/>
    <property type="evidence" value="ECO:0007669"/>
    <property type="project" value="UniProtKB-UniRule"/>
</dbReference>
<dbReference type="GO" id="GO:0003735">
    <property type="term" value="F:structural constituent of ribosome"/>
    <property type="evidence" value="ECO:0000318"/>
    <property type="project" value="GO_Central"/>
</dbReference>
<dbReference type="GO" id="GO:0006412">
    <property type="term" value="P:translation"/>
    <property type="evidence" value="ECO:0000318"/>
    <property type="project" value="GO_Central"/>
</dbReference>
<dbReference type="FunFam" id="3.30.420.80:FF:000003">
    <property type="entry name" value="30S ribosomal protein S11, chloroplastic"/>
    <property type="match status" value="1"/>
</dbReference>
<dbReference type="Gene3D" id="3.30.420.80">
    <property type="entry name" value="Ribosomal protein S11"/>
    <property type="match status" value="1"/>
</dbReference>
<dbReference type="HAMAP" id="MF_01310">
    <property type="entry name" value="Ribosomal_uS11"/>
    <property type="match status" value="1"/>
</dbReference>
<dbReference type="InterPro" id="IPR001971">
    <property type="entry name" value="Ribosomal_uS11"/>
</dbReference>
<dbReference type="InterPro" id="IPR018102">
    <property type="entry name" value="Ribosomal_uS11_CS"/>
</dbReference>
<dbReference type="InterPro" id="IPR036967">
    <property type="entry name" value="Ribosomal_uS11_sf"/>
</dbReference>
<dbReference type="NCBIfam" id="NF003698">
    <property type="entry name" value="PRK05309.1"/>
    <property type="match status" value="1"/>
</dbReference>
<dbReference type="PANTHER" id="PTHR11759">
    <property type="entry name" value="40S RIBOSOMAL PROTEIN S14/30S RIBOSOMAL PROTEIN S11"/>
    <property type="match status" value="1"/>
</dbReference>
<dbReference type="Pfam" id="PF00411">
    <property type="entry name" value="Ribosomal_S11"/>
    <property type="match status" value="1"/>
</dbReference>
<dbReference type="PIRSF" id="PIRSF002131">
    <property type="entry name" value="Ribosomal_S11"/>
    <property type="match status" value="1"/>
</dbReference>
<dbReference type="SUPFAM" id="SSF53137">
    <property type="entry name" value="Translational machinery components"/>
    <property type="match status" value="1"/>
</dbReference>
<dbReference type="PROSITE" id="PS00054">
    <property type="entry name" value="RIBOSOMAL_S11"/>
    <property type="match status" value="1"/>
</dbReference>
<feature type="chain" id="PRO_0000123330" description="Small ribosomal subunit protein uS11c">
    <location>
        <begin position="1"/>
        <end position="143"/>
    </location>
</feature>
<accession>Q95H53</accession>
<gene>
    <name evidence="1" type="primary">rps11</name>
</gene>
<proteinExistence type="inferred from homology"/>
<evidence type="ECO:0000255" key="1">
    <source>
        <dbReference type="HAMAP-Rule" id="MF_01310"/>
    </source>
</evidence>
<evidence type="ECO:0000305" key="2"/>
<organism>
    <name type="scientific">Triticum aestivum</name>
    <name type="common">Wheat</name>
    <dbReference type="NCBI Taxonomy" id="4565"/>
    <lineage>
        <taxon>Eukaryota</taxon>
        <taxon>Viridiplantae</taxon>
        <taxon>Streptophyta</taxon>
        <taxon>Embryophyta</taxon>
        <taxon>Tracheophyta</taxon>
        <taxon>Spermatophyta</taxon>
        <taxon>Magnoliopsida</taxon>
        <taxon>Liliopsida</taxon>
        <taxon>Poales</taxon>
        <taxon>Poaceae</taxon>
        <taxon>BOP clade</taxon>
        <taxon>Pooideae</taxon>
        <taxon>Triticodae</taxon>
        <taxon>Triticeae</taxon>
        <taxon>Triticinae</taxon>
        <taxon>Triticum</taxon>
    </lineage>
</organism>
<sequence>MAKAIPKIGSRKKVRIGLRRNARFSLRKSARRITKGVIHVQASFNNTIITVTDPQGRVVFWSSAGTCGFKSSRKASPYAGQRTAVDAIRTVGLQRAEVMVKGAGSGRDAALRAIAKSGVRLSCIRDVTPMPHNGCRPPKKRRL</sequence>